<feature type="chain" id="PRO_0000281866" description="Zinc finger protein 215">
    <location>
        <begin position="1"/>
        <end position="517"/>
    </location>
</feature>
<feature type="domain" description="SCAN box" evidence="3">
    <location>
        <begin position="48"/>
        <end position="126"/>
    </location>
</feature>
<feature type="domain" description="KRAB" evidence="2">
    <location>
        <begin position="164"/>
        <end position="237"/>
    </location>
</feature>
<feature type="zinc finger region" description="C2H2-type 1" evidence="1">
    <location>
        <begin position="379"/>
        <end position="401"/>
    </location>
</feature>
<feature type="zinc finger region" description="C2H2-type 2" evidence="1">
    <location>
        <begin position="407"/>
        <end position="429"/>
    </location>
</feature>
<feature type="zinc finger region" description="C2H2-type 3" evidence="1">
    <location>
        <begin position="462"/>
        <end position="484"/>
    </location>
</feature>
<feature type="zinc finger region" description="C2H2-type 4" evidence="1">
    <location>
        <begin position="490"/>
        <end position="512"/>
    </location>
</feature>
<comment type="function">
    <text>May be involved in transcriptional regulation.</text>
</comment>
<comment type="subcellular location">
    <subcellularLocation>
        <location evidence="4">Nucleus</location>
    </subcellularLocation>
</comment>
<comment type="similarity">
    <text evidence="4">Belongs to the krueppel C2H2-type zinc-finger protein family.</text>
</comment>
<gene>
    <name type="primary">ZNF215</name>
</gene>
<organism>
    <name type="scientific">Pongo abelii</name>
    <name type="common">Sumatran orangutan</name>
    <name type="synonym">Pongo pygmaeus abelii</name>
    <dbReference type="NCBI Taxonomy" id="9601"/>
    <lineage>
        <taxon>Eukaryota</taxon>
        <taxon>Metazoa</taxon>
        <taxon>Chordata</taxon>
        <taxon>Craniata</taxon>
        <taxon>Vertebrata</taxon>
        <taxon>Euteleostomi</taxon>
        <taxon>Mammalia</taxon>
        <taxon>Eutheria</taxon>
        <taxon>Euarchontoglires</taxon>
        <taxon>Primates</taxon>
        <taxon>Haplorrhini</taxon>
        <taxon>Catarrhini</taxon>
        <taxon>Hominidae</taxon>
        <taxon>Pongo</taxon>
    </lineage>
</organism>
<protein>
    <recommendedName>
        <fullName>Zinc finger protein 215</fullName>
    </recommendedName>
</protein>
<sequence>MQPLSKLMAISKPQNLSLHEQREVLRADMCWQQETIPVMETHDSEASRQKFRHFQYLKVSGPHEALSQLRELCLQWLRPEIHTKKQIIEQLVLEQFLAILPEEVRTWVHLQHPNNSEDMVTLIEDVIEMLEDEGMPCKDSAPQMGSIKEKMKAGSPTGKPQEPVTFKDVVVEFSKEEWGQLDSAVKNLYRNVMLENFRNLNSLRKAHLLSKPFESLKLESRKKRWIMEKEIPRKTIFDMKSISGEESSHGVIVTRLTESGHPSSDVWKGENWLYRNQKKWDINLPQEAFIPETSYTDEEDFECSENKETFDINSVSSICAIQQGIPSRKGSPKCDKFKTQFKFNLDSVGKQHSEYEYVNDLSLRTDIRHQKSHTTMNSYECYQCGKAFCRSSSLIRHQIIHTGEKPYKCSECGRFFNRRTNLTKHQKLHAEVKACTSNKCGKAVSKSEDGNNPALHFGNNFYECVNCGKSFNRSSSLIRHQMIHTGEKPFKCKECNKAFNRSSNLVKHQKLHTRDKS</sequence>
<accession>Q5RE50</accession>
<reference key="1">
    <citation type="submission" date="2004-11" db="EMBL/GenBank/DDBJ databases">
        <authorList>
            <consortium name="The German cDNA consortium"/>
        </authorList>
    </citation>
    <scope>NUCLEOTIDE SEQUENCE [LARGE SCALE MRNA]</scope>
    <source>
        <tissue>Kidney</tissue>
    </source>
</reference>
<proteinExistence type="evidence at transcript level"/>
<dbReference type="EMBL" id="CR857687">
    <property type="protein sequence ID" value="CAH89957.1"/>
    <property type="molecule type" value="mRNA"/>
</dbReference>
<dbReference type="RefSeq" id="NP_001124919.1">
    <property type="nucleotide sequence ID" value="NM_001131447.1"/>
</dbReference>
<dbReference type="SMR" id="Q5RE50"/>
<dbReference type="FunCoup" id="Q5RE50">
    <property type="interactions" value="54"/>
</dbReference>
<dbReference type="STRING" id="9601.ENSPPYP00000004043"/>
<dbReference type="GeneID" id="100171789"/>
<dbReference type="KEGG" id="pon:100171789"/>
<dbReference type="CTD" id="7762"/>
<dbReference type="eggNOG" id="KOG1721">
    <property type="taxonomic scope" value="Eukaryota"/>
</dbReference>
<dbReference type="InParanoid" id="Q5RE50"/>
<dbReference type="OrthoDB" id="6077919at2759"/>
<dbReference type="Proteomes" id="UP000001595">
    <property type="component" value="Unplaced"/>
</dbReference>
<dbReference type="GO" id="GO:0005634">
    <property type="term" value="C:nucleus"/>
    <property type="evidence" value="ECO:0007669"/>
    <property type="project" value="UniProtKB-SubCell"/>
</dbReference>
<dbReference type="GO" id="GO:0000981">
    <property type="term" value="F:DNA-binding transcription factor activity, RNA polymerase II-specific"/>
    <property type="evidence" value="ECO:0007669"/>
    <property type="project" value="TreeGrafter"/>
</dbReference>
<dbReference type="GO" id="GO:0000978">
    <property type="term" value="F:RNA polymerase II cis-regulatory region sequence-specific DNA binding"/>
    <property type="evidence" value="ECO:0007669"/>
    <property type="project" value="TreeGrafter"/>
</dbReference>
<dbReference type="GO" id="GO:0008270">
    <property type="term" value="F:zinc ion binding"/>
    <property type="evidence" value="ECO:0007669"/>
    <property type="project" value="UniProtKB-KW"/>
</dbReference>
<dbReference type="CDD" id="cd07765">
    <property type="entry name" value="KRAB_A-box"/>
    <property type="match status" value="1"/>
</dbReference>
<dbReference type="CDD" id="cd07936">
    <property type="entry name" value="SCAN"/>
    <property type="match status" value="1"/>
</dbReference>
<dbReference type="FunFam" id="1.10.4020.10:FF:000001">
    <property type="entry name" value="zinc finger protein 263 isoform X1"/>
    <property type="match status" value="1"/>
</dbReference>
<dbReference type="FunFam" id="3.30.160.60:FF:000690">
    <property type="entry name" value="Zinc finger protein 354C"/>
    <property type="match status" value="1"/>
</dbReference>
<dbReference type="FunFam" id="3.30.160.60:FF:001865">
    <property type="entry name" value="Zinc finger protein 404"/>
    <property type="match status" value="1"/>
</dbReference>
<dbReference type="FunFam" id="3.30.160.60:FF:000496">
    <property type="entry name" value="Zinc finger with KRAB and SCAN domains 1"/>
    <property type="match status" value="2"/>
</dbReference>
<dbReference type="Gene3D" id="6.10.140.140">
    <property type="match status" value="1"/>
</dbReference>
<dbReference type="Gene3D" id="3.30.160.60">
    <property type="entry name" value="Classic Zinc Finger"/>
    <property type="match status" value="4"/>
</dbReference>
<dbReference type="Gene3D" id="1.10.4020.10">
    <property type="entry name" value="DNA breaking-rejoining enzymes"/>
    <property type="match status" value="1"/>
</dbReference>
<dbReference type="InterPro" id="IPR050752">
    <property type="entry name" value="C2H2-ZF_domain"/>
</dbReference>
<dbReference type="InterPro" id="IPR001909">
    <property type="entry name" value="KRAB"/>
</dbReference>
<dbReference type="InterPro" id="IPR036051">
    <property type="entry name" value="KRAB_dom_sf"/>
</dbReference>
<dbReference type="InterPro" id="IPR003309">
    <property type="entry name" value="SCAN_dom"/>
</dbReference>
<dbReference type="InterPro" id="IPR038269">
    <property type="entry name" value="SCAN_sf"/>
</dbReference>
<dbReference type="InterPro" id="IPR036236">
    <property type="entry name" value="Znf_C2H2_sf"/>
</dbReference>
<dbReference type="InterPro" id="IPR013087">
    <property type="entry name" value="Znf_C2H2_type"/>
</dbReference>
<dbReference type="PANTHER" id="PTHR24384">
    <property type="entry name" value="FINGER PUTATIVE TRANSCRIPTION FACTOR FAMILY-RELATED"/>
    <property type="match status" value="1"/>
</dbReference>
<dbReference type="PANTHER" id="PTHR24384:SF246">
    <property type="entry name" value="GENE, 19965-RELATED"/>
    <property type="match status" value="1"/>
</dbReference>
<dbReference type="Pfam" id="PF01352">
    <property type="entry name" value="KRAB"/>
    <property type="match status" value="1"/>
</dbReference>
<dbReference type="Pfam" id="PF02023">
    <property type="entry name" value="SCAN"/>
    <property type="match status" value="1"/>
</dbReference>
<dbReference type="Pfam" id="PF00096">
    <property type="entry name" value="zf-C2H2"/>
    <property type="match status" value="4"/>
</dbReference>
<dbReference type="SMART" id="SM00349">
    <property type="entry name" value="KRAB"/>
    <property type="match status" value="1"/>
</dbReference>
<dbReference type="SMART" id="SM00431">
    <property type="entry name" value="SCAN"/>
    <property type="match status" value="1"/>
</dbReference>
<dbReference type="SMART" id="SM00355">
    <property type="entry name" value="ZnF_C2H2"/>
    <property type="match status" value="4"/>
</dbReference>
<dbReference type="SUPFAM" id="SSF57667">
    <property type="entry name" value="beta-beta-alpha zinc fingers"/>
    <property type="match status" value="3"/>
</dbReference>
<dbReference type="SUPFAM" id="SSF109640">
    <property type="entry name" value="KRAB domain (Kruppel-associated box)"/>
    <property type="match status" value="1"/>
</dbReference>
<dbReference type="SUPFAM" id="SSF47353">
    <property type="entry name" value="Retrovirus capsid dimerization domain-like"/>
    <property type="match status" value="1"/>
</dbReference>
<dbReference type="PROSITE" id="PS50805">
    <property type="entry name" value="KRAB"/>
    <property type="match status" value="1"/>
</dbReference>
<dbReference type="PROSITE" id="PS50804">
    <property type="entry name" value="SCAN_BOX"/>
    <property type="match status" value="1"/>
</dbReference>
<dbReference type="PROSITE" id="PS00028">
    <property type="entry name" value="ZINC_FINGER_C2H2_1"/>
    <property type="match status" value="4"/>
</dbReference>
<dbReference type="PROSITE" id="PS50157">
    <property type="entry name" value="ZINC_FINGER_C2H2_2"/>
    <property type="match status" value="4"/>
</dbReference>
<name>ZN215_PONAB</name>
<evidence type="ECO:0000255" key="1">
    <source>
        <dbReference type="PROSITE-ProRule" id="PRU00042"/>
    </source>
</evidence>
<evidence type="ECO:0000255" key="2">
    <source>
        <dbReference type="PROSITE-ProRule" id="PRU00119"/>
    </source>
</evidence>
<evidence type="ECO:0000255" key="3">
    <source>
        <dbReference type="PROSITE-ProRule" id="PRU00187"/>
    </source>
</evidence>
<evidence type="ECO:0000305" key="4"/>
<keyword id="KW-0238">DNA-binding</keyword>
<keyword id="KW-0479">Metal-binding</keyword>
<keyword id="KW-0539">Nucleus</keyword>
<keyword id="KW-1185">Reference proteome</keyword>
<keyword id="KW-0677">Repeat</keyword>
<keyword id="KW-0804">Transcription</keyword>
<keyword id="KW-0805">Transcription regulation</keyword>
<keyword id="KW-0862">Zinc</keyword>
<keyword id="KW-0863">Zinc-finger</keyword>